<organism>
    <name type="scientific">Escherichia coli O6:H1 (strain CFT073 / ATCC 700928 / UPEC)</name>
    <dbReference type="NCBI Taxonomy" id="199310"/>
    <lineage>
        <taxon>Bacteria</taxon>
        <taxon>Pseudomonadati</taxon>
        <taxon>Pseudomonadota</taxon>
        <taxon>Gammaproteobacteria</taxon>
        <taxon>Enterobacterales</taxon>
        <taxon>Enterobacteriaceae</taxon>
        <taxon>Escherichia</taxon>
    </lineage>
</organism>
<dbReference type="EC" id="2.3.1.129" evidence="1"/>
<dbReference type="EMBL" id="AE014075">
    <property type="protein sequence ID" value="AAN78710.1"/>
    <property type="molecule type" value="Genomic_DNA"/>
</dbReference>
<dbReference type="RefSeq" id="WP_000565966.1">
    <property type="nucleotide sequence ID" value="NZ_CP051263.1"/>
</dbReference>
<dbReference type="SMR" id="P0A723"/>
<dbReference type="STRING" id="199310.c0218"/>
<dbReference type="GeneID" id="93777244"/>
<dbReference type="KEGG" id="ecc:c0218"/>
<dbReference type="eggNOG" id="COG1043">
    <property type="taxonomic scope" value="Bacteria"/>
</dbReference>
<dbReference type="HOGENOM" id="CLU_061249_0_0_6"/>
<dbReference type="BioCyc" id="ECOL199310:C0218-MONOMER"/>
<dbReference type="UniPathway" id="UPA00359">
    <property type="reaction ID" value="UER00477"/>
</dbReference>
<dbReference type="Proteomes" id="UP000001410">
    <property type="component" value="Chromosome"/>
</dbReference>
<dbReference type="GO" id="GO:0005737">
    <property type="term" value="C:cytoplasm"/>
    <property type="evidence" value="ECO:0007669"/>
    <property type="project" value="UniProtKB-SubCell"/>
</dbReference>
<dbReference type="GO" id="GO:0016020">
    <property type="term" value="C:membrane"/>
    <property type="evidence" value="ECO:0007669"/>
    <property type="project" value="GOC"/>
</dbReference>
<dbReference type="GO" id="GO:0008780">
    <property type="term" value="F:acyl-[acyl-carrier-protein]-UDP-N-acetylglucosamine O-acyltransferase activity"/>
    <property type="evidence" value="ECO:0007669"/>
    <property type="project" value="UniProtKB-UniRule"/>
</dbReference>
<dbReference type="GO" id="GO:0009245">
    <property type="term" value="P:lipid A biosynthetic process"/>
    <property type="evidence" value="ECO:0007669"/>
    <property type="project" value="UniProtKB-UniRule"/>
</dbReference>
<dbReference type="CDD" id="cd03351">
    <property type="entry name" value="LbH_UDP-GlcNAc_AT"/>
    <property type="match status" value="1"/>
</dbReference>
<dbReference type="FunFam" id="1.20.1180.10:FF:000001">
    <property type="entry name" value="Acyl-[acyl-carrier-protein]--UDP-N-acetylglucosamine O-acyltransferase"/>
    <property type="match status" value="1"/>
</dbReference>
<dbReference type="FunFam" id="2.160.10.10:FF:000003">
    <property type="entry name" value="Acyl-[acyl-carrier-protein]--UDP-N-acetylglucosamine O-acyltransferase"/>
    <property type="match status" value="1"/>
</dbReference>
<dbReference type="Gene3D" id="2.160.10.10">
    <property type="entry name" value="Hexapeptide repeat proteins"/>
    <property type="match status" value="1"/>
</dbReference>
<dbReference type="Gene3D" id="1.20.1180.10">
    <property type="entry name" value="Udp N-acetylglucosamine O-acyltransferase, C-terminal domain"/>
    <property type="match status" value="1"/>
</dbReference>
<dbReference type="HAMAP" id="MF_00387">
    <property type="entry name" value="LpxA"/>
    <property type="match status" value="1"/>
</dbReference>
<dbReference type="InterPro" id="IPR029098">
    <property type="entry name" value="Acetyltransf_C"/>
</dbReference>
<dbReference type="InterPro" id="IPR037157">
    <property type="entry name" value="Acetyltransf_C_sf"/>
</dbReference>
<dbReference type="InterPro" id="IPR001451">
    <property type="entry name" value="Hexapep"/>
</dbReference>
<dbReference type="InterPro" id="IPR018357">
    <property type="entry name" value="Hexapep_transf_CS"/>
</dbReference>
<dbReference type="InterPro" id="IPR010137">
    <property type="entry name" value="Lipid_A_LpxA"/>
</dbReference>
<dbReference type="InterPro" id="IPR011004">
    <property type="entry name" value="Trimer_LpxA-like_sf"/>
</dbReference>
<dbReference type="NCBIfam" id="TIGR01852">
    <property type="entry name" value="lipid_A_lpxA"/>
    <property type="match status" value="1"/>
</dbReference>
<dbReference type="NCBIfam" id="NF003657">
    <property type="entry name" value="PRK05289.1"/>
    <property type="match status" value="1"/>
</dbReference>
<dbReference type="PANTHER" id="PTHR43480">
    <property type="entry name" value="ACYL-[ACYL-CARRIER-PROTEIN]--UDP-N-ACETYLGLUCOSAMINE O-ACYLTRANSFERASE"/>
    <property type="match status" value="1"/>
</dbReference>
<dbReference type="PANTHER" id="PTHR43480:SF1">
    <property type="entry name" value="ACYL-[ACYL-CARRIER-PROTEIN]--UDP-N-ACETYLGLUCOSAMINE O-ACYLTRANSFERASE, MITOCHONDRIAL-RELATED"/>
    <property type="match status" value="1"/>
</dbReference>
<dbReference type="Pfam" id="PF13720">
    <property type="entry name" value="Acetyltransf_11"/>
    <property type="match status" value="1"/>
</dbReference>
<dbReference type="Pfam" id="PF00132">
    <property type="entry name" value="Hexapep"/>
    <property type="match status" value="2"/>
</dbReference>
<dbReference type="PIRSF" id="PIRSF000456">
    <property type="entry name" value="UDP-GlcNAc_acltr"/>
    <property type="match status" value="1"/>
</dbReference>
<dbReference type="SUPFAM" id="SSF51161">
    <property type="entry name" value="Trimeric LpxA-like enzymes"/>
    <property type="match status" value="1"/>
</dbReference>
<dbReference type="PROSITE" id="PS00101">
    <property type="entry name" value="HEXAPEP_TRANSFERASES"/>
    <property type="match status" value="2"/>
</dbReference>
<name>LPXA_ECOL6</name>
<feature type="chain" id="PRO_0000188047" description="Acyl-[acyl-carrier-protein]--UDP-N-acetylglucosamine O-acyltransferase">
    <location>
        <begin position="1"/>
        <end position="262"/>
    </location>
</feature>
<keyword id="KW-0012">Acyltransferase</keyword>
<keyword id="KW-0963">Cytoplasm</keyword>
<keyword id="KW-0441">Lipid A biosynthesis</keyword>
<keyword id="KW-0444">Lipid biosynthesis</keyword>
<keyword id="KW-0443">Lipid metabolism</keyword>
<keyword id="KW-1185">Reference proteome</keyword>
<keyword id="KW-0677">Repeat</keyword>
<keyword id="KW-0808">Transferase</keyword>
<proteinExistence type="inferred from homology"/>
<comment type="function">
    <text evidence="1">Involved in the biosynthesis of lipid A, a phosphorylated glycolipid that anchors the lipopolysaccharide to the outer membrane of the cell.</text>
</comment>
<comment type="catalytic activity">
    <reaction evidence="1">
        <text>a (3R)-hydroxyacyl-[ACP] + UDP-N-acetyl-alpha-D-glucosamine = a UDP-3-O-[(3R)-3-hydroxyacyl]-N-acetyl-alpha-D-glucosamine + holo-[ACP]</text>
        <dbReference type="Rhea" id="RHEA:67812"/>
        <dbReference type="Rhea" id="RHEA-COMP:9685"/>
        <dbReference type="Rhea" id="RHEA-COMP:9945"/>
        <dbReference type="ChEBI" id="CHEBI:57705"/>
        <dbReference type="ChEBI" id="CHEBI:64479"/>
        <dbReference type="ChEBI" id="CHEBI:78827"/>
        <dbReference type="ChEBI" id="CHEBI:173225"/>
        <dbReference type="EC" id="2.3.1.129"/>
    </reaction>
</comment>
<comment type="pathway">
    <text evidence="1">Glycolipid biosynthesis; lipid IV(A) biosynthesis; lipid IV(A) from (3R)-3-hydroxytetradecanoyl-[acyl-carrier-protein] and UDP-N-acetyl-alpha-D-glucosamine: step 1/6.</text>
</comment>
<comment type="subunit">
    <text evidence="1">Homotrimer.</text>
</comment>
<comment type="subcellular location">
    <subcellularLocation>
        <location evidence="1">Cytoplasm</location>
    </subcellularLocation>
</comment>
<comment type="similarity">
    <text evidence="1">Belongs to the transferase hexapeptide repeat family. LpxA subfamily.</text>
</comment>
<reference key="1">
    <citation type="journal article" date="2002" name="Proc. Natl. Acad. Sci. U.S.A.">
        <title>Extensive mosaic structure revealed by the complete genome sequence of uropathogenic Escherichia coli.</title>
        <authorList>
            <person name="Welch R.A."/>
            <person name="Burland V."/>
            <person name="Plunkett G. III"/>
            <person name="Redford P."/>
            <person name="Roesch P."/>
            <person name="Rasko D."/>
            <person name="Buckles E.L."/>
            <person name="Liou S.-R."/>
            <person name="Boutin A."/>
            <person name="Hackett J."/>
            <person name="Stroud D."/>
            <person name="Mayhew G.F."/>
            <person name="Rose D.J."/>
            <person name="Zhou S."/>
            <person name="Schwartz D.C."/>
            <person name="Perna N.T."/>
            <person name="Mobley H.L.T."/>
            <person name="Donnenberg M.S."/>
            <person name="Blattner F.R."/>
        </authorList>
    </citation>
    <scope>NUCLEOTIDE SEQUENCE [LARGE SCALE GENOMIC DNA]</scope>
    <source>
        <strain>CFT073 / ATCC 700928 / UPEC</strain>
    </source>
</reference>
<accession>P0A723</accession>
<accession>P10440</accession>
<accession>P78243</accession>
<gene>
    <name evidence="1" type="primary">lpxA</name>
    <name type="ordered locus">c0218</name>
</gene>
<sequence>MIDKSAFVHPTAIVEEGASIGANAHIGPFCIVGPHVEIGEGTVLKSHVVVNGHTKIGRDNEIYQFASIGEVNQDLKYAGEPTRVEIGDRNRIRESVTIHRGTVQGGGLTKVGSDNLLMINAHIAHDCTVGNRCILANNATLAGHVSVDDFAIIGGMTAVHQFCIIGAHVMVGGCSGVAQDVPPYVIAQGNHATPFGVNIEGLKRRGFSREAITAIRNAYKLIYRSGKTLDEVKPEIAELAETYPEVKAFTDFFARSTRGLIR</sequence>
<protein>
    <recommendedName>
        <fullName evidence="1">Acyl-[acyl-carrier-protein]--UDP-N-acetylglucosamine O-acyltransferase</fullName>
        <shortName evidence="1">UDP-N-acetylglucosamine acyltransferase</shortName>
        <ecNumber evidence="1">2.3.1.129</ecNumber>
    </recommendedName>
</protein>
<evidence type="ECO:0000255" key="1">
    <source>
        <dbReference type="HAMAP-Rule" id="MF_00387"/>
    </source>
</evidence>